<sequence length="214" mass="21859">MISFLRGTVAHVGLSSAVIDLNGAGMSVNATPQTLSGLRTGEEGKLFTSLIVREDSLTLFGFSSDDEREVFDVLLSVSGVGPRLALAVLAVHDPEAIRVAAHTGDGKAFTKVPGIGPKVAGRIVLELAGKLVPHGTGAAAAPAAAASAPWKPQVVAAMTSLGWSEKDATSSIDKALSDSPELEAGGQVAEILRATLRWLGQDGARAGNRVGSRG</sequence>
<organism>
    <name type="scientific">Arthrobacter sp. (strain FB24)</name>
    <dbReference type="NCBI Taxonomy" id="290399"/>
    <lineage>
        <taxon>Bacteria</taxon>
        <taxon>Bacillati</taxon>
        <taxon>Actinomycetota</taxon>
        <taxon>Actinomycetes</taxon>
        <taxon>Micrococcales</taxon>
        <taxon>Micrococcaceae</taxon>
        <taxon>Arthrobacter</taxon>
    </lineage>
</organism>
<proteinExistence type="inferred from homology"/>
<gene>
    <name evidence="1" type="primary">ruvA</name>
    <name type="ordered locus">Arth_2302</name>
</gene>
<reference key="1">
    <citation type="journal article" date="2013" name="Stand. Genomic Sci.">
        <title>Complete genome sequence of Arthrobacter sp. strain FB24.</title>
        <authorList>
            <person name="Nakatsu C.H."/>
            <person name="Barabote R."/>
            <person name="Thompson S."/>
            <person name="Bruce D."/>
            <person name="Detter C."/>
            <person name="Brettin T."/>
            <person name="Han C."/>
            <person name="Beasley F."/>
            <person name="Chen W."/>
            <person name="Konopka A."/>
            <person name="Xie G."/>
        </authorList>
    </citation>
    <scope>NUCLEOTIDE SEQUENCE [LARGE SCALE GENOMIC DNA]</scope>
    <source>
        <strain>FB24</strain>
    </source>
</reference>
<comment type="function">
    <text evidence="1">The RuvA-RuvB-RuvC complex processes Holliday junction (HJ) DNA during genetic recombination and DNA repair, while the RuvA-RuvB complex plays an important role in the rescue of blocked DNA replication forks via replication fork reversal (RFR). RuvA specifically binds to HJ cruciform DNA, conferring on it an open structure. The RuvB hexamer acts as an ATP-dependent pump, pulling dsDNA into and through the RuvAB complex. HJ branch migration allows RuvC to scan DNA until it finds its consensus sequence, where it cleaves and resolves the cruciform DNA.</text>
</comment>
<comment type="subunit">
    <text evidence="1">Homotetramer. Forms an RuvA(8)-RuvB(12)-Holliday junction (HJ) complex. HJ DNA is sandwiched between 2 RuvA tetramers; dsDNA enters through RuvA and exits via RuvB. An RuvB hexamer assembles on each DNA strand where it exits the tetramer. Each RuvB hexamer is contacted by two RuvA subunits (via domain III) on 2 adjacent RuvB subunits; this complex drives branch migration. In the full resolvosome a probable DNA-RuvA(4)-RuvB(12)-RuvC(2) complex forms which resolves the HJ.</text>
</comment>
<comment type="subcellular location">
    <subcellularLocation>
        <location evidence="1">Cytoplasm</location>
    </subcellularLocation>
</comment>
<comment type="domain">
    <text evidence="1">Has three domains with a flexible linker between the domains II and III and assumes an 'L' shape. Domain III is highly mobile and contacts RuvB.</text>
</comment>
<comment type="similarity">
    <text evidence="1">Belongs to the RuvA family.</text>
</comment>
<evidence type="ECO:0000255" key="1">
    <source>
        <dbReference type="HAMAP-Rule" id="MF_00031"/>
    </source>
</evidence>
<feature type="chain" id="PRO_1000002394" description="Holliday junction branch migration complex subunit RuvA">
    <location>
        <begin position="1"/>
        <end position="214"/>
    </location>
</feature>
<feature type="region of interest" description="Domain I" evidence="1">
    <location>
        <begin position="1"/>
        <end position="63"/>
    </location>
</feature>
<feature type="region of interest" description="Domain II" evidence="1">
    <location>
        <begin position="64"/>
        <end position="142"/>
    </location>
</feature>
<feature type="region of interest" description="Flexible linker" evidence="1">
    <location>
        <begin position="143"/>
        <end position="153"/>
    </location>
</feature>
<feature type="region of interest" description="Domain III" evidence="1">
    <location>
        <begin position="153"/>
        <end position="214"/>
    </location>
</feature>
<name>RUVA_ARTS2</name>
<dbReference type="EMBL" id="CP000454">
    <property type="protein sequence ID" value="ABK03682.1"/>
    <property type="molecule type" value="Genomic_DNA"/>
</dbReference>
<dbReference type="RefSeq" id="WP_011692146.1">
    <property type="nucleotide sequence ID" value="NC_008541.1"/>
</dbReference>
<dbReference type="SMR" id="A0JXB2"/>
<dbReference type="STRING" id="290399.Arth_2302"/>
<dbReference type="KEGG" id="art:Arth_2302"/>
<dbReference type="eggNOG" id="COG0632">
    <property type="taxonomic scope" value="Bacteria"/>
</dbReference>
<dbReference type="HOGENOM" id="CLU_087936_2_1_11"/>
<dbReference type="OrthoDB" id="5293449at2"/>
<dbReference type="Proteomes" id="UP000000754">
    <property type="component" value="Chromosome"/>
</dbReference>
<dbReference type="GO" id="GO:0005737">
    <property type="term" value="C:cytoplasm"/>
    <property type="evidence" value="ECO:0007669"/>
    <property type="project" value="UniProtKB-SubCell"/>
</dbReference>
<dbReference type="GO" id="GO:0009379">
    <property type="term" value="C:Holliday junction helicase complex"/>
    <property type="evidence" value="ECO:0007669"/>
    <property type="project" value="InterPro"/>
</dbReference>
<dbReference type="GO" id="GO:0048476">
    <property type="term" value="C:Holliday junction resolvase complex"/>
    <property type="evidence" value="ECO:0007669"/>
    <property type="project" value="UniProtKB-UniRule"/>
</dbReference>
<dbReference type="GO" id="GO:0005524">
    <property type="term" value="F:ATP binding"/>
    <property type="evidence" value="ECO:0007669"/>
    <property type="project" value="InterPro"/>
</dbReference>
<dbReference type="GO" id="GO:0000400">
    <property type="term" value="F:four-way junction DNA binding"/>
    <property type="evidence" value="ECO:0007669"/>
    <property type="project" value="UniProtKB-UniRule"/>
</dbReference>
<dbReference type="GO" id="GO:0009378">
    <property type="term" value="F:four-way junction helicase activity"/>
    <property type="evidence" value="ECO:0007669"/>
    <property type="project" value="InterPro"/>
</dbReference>
<dbReference type="GO" id="GO:0006310">
    <property type="term" value="P:DNA recombination"/>
    <property type="evidence" value="ECO:0007669"/>
    <property type="project" value="UniProtKB-UniRule"/>
</dbReference>
<dbReference type="GO" id="GO:0006281">
    <property type="term" value="P:DNA repair"/>
    <property type="evidence" value="ECO:0007669"/>
    <property type="project" value="UniProtKB-UniRule"/>
</dbReference>
<dbReference type="CDD" id="cd14332">
    <property type="entry name" value="UBA_RuvA_C"/>
    <property type="match status" value="1"/>
</dbReference>
<dbReference type="Gene3D" id="1.10.150.20">
    <property type="entry name" value="5' to 3' exonuclease, C-terminal subdomain"/>
    <property type="match status" value="1"/>
</dbReference>
<dbReference type="Gene3D" id="1.10.8.10">
    <property type="entry name" value="DNA helicase RuvA subunit, C-terminal domain"/>
    <property type="match status" value="1"/>
</dbReference>
<dbReference type="Gene3D" id="2.40.50.140">
    <property type="entry name" value="Nucleic acid-binding proteins"/>
    <property type="match status" value="1"/>
</dbReference>
<dbReference type="HAMAP" id="MF_00031">
    <property type="entry name" value="DNA_HJ_migration_RuvA"/>
    <property type="match status" value="1"/>
</dbReference>
<dbReference type="InterPro" id="IPR013849">
    <property type="entry name" value="DNA_helicase_Holl-junc_RuvA_I"/>
</dbReference>
<dbReference type="InterPro" id="IPR003583">
    <property type="entry name" value="Hlx-hairpin-Hlx_DNA-bd_motif"/>
</dbReference>
<dbReference type="InterPro" id="IPR012340">
    <property type="entry name" value="NA-bd_OB-fold"/>
</dbReference>
<dbReference type="InterPro" id="IPR000085">
    <property type="entry name" value="RuvA"/>
</dbReference>
<dbReference type="InterPro" id="IPR010994">
    <property type="entry name" value="RuvA_2-like"/>
</dbReference>
<dbReference type="InterPro" id="IPR011114">
    <property type="entry name" value="RuvA_C"/>
</dbReference>
<dbReference type="InterPro" id="IPR036267">
    <property type="entry name" value="RuvA_C_sf"/>
</dbReference>
<dbReference type="NCBIfam" id="TIGR00084">
    <property type="entry name" value="ruvA"/>
    <property type="match status" value="1"/>
</dbReference>
<dbReference type="Pfam" id="PF14520">
    <property type="entry name" value="HHH_5"/>
    <property type="match status" value="1"/>
</dbReference>
<dbReference type="Pfam" id="PF07499">
    <property type="entry name" value="RuvA_C"/>
    <property type="match status" value="1"/>
</dbReference>
<dbReference type="Pfam" id="PF01330">
    <property type="entry name" value="RuvA_N"/>
    <property type="match status" value="1"/>
</dbReference>
<dbReference type="SMART" id="SM00278">
    <property type="entry name" value="HhH1"/>
    <property type="match status" value="2"/>
</dbReference>
<dbReference type="SUPFAM" id="SSF46929">
    <property type="entry name" value="DNA helicase RuvA subunit, C-terminal domain"/>
    <property type="match status" value="1"/>
</dbReference>
<dbReference type="SUPFAM" id="SSF50249">
    <property type="entry name" value="Nucleic acid-binding proteins"/>
    <property type="match status" value="1"/>
</dbReference>
<dbReference type="SUPFAM" id="SSF47781">
    <property type="entry name" value="RuvA domain 2-like"/>
    <property type="match status" value="1"/>
</dbReference>
<keyword id="KW-0963">Cytoplasm</keyword>
<keyword id="KW-0227">DNA damage</keyword>
<keyword id="KW-0233">DNA recombination</keyword>
<keyword id="KW-0234">DNA repair</keyword>
<keyword id="KW-0238">DNA-binding</keyword>
<keyword id="KW-1185">Reference proteome</keyword>
<accession>A0JXB2</accession>
<protein>
    <recommendedName>
        <fullName evidence="1">Holliday junction branch migration complex subunit RuvA</fullName>
    </recommendedName>
</protein>